<sequence>MSKPIVMERGVKYRDADKMALIPVKNVATEREALLRKPEWMKIKLPADSTRIQGIKAAMRKNGLHSVCEEASCPNLAECFNHGTATFMILGAICTRRCPFCDVAHGRPVAPDANEPVKLAQTIADMALRYVVITSVDRDDLRDGGAQHFADCITAIREKSPQIKIETLVPDFRGRMDRALDILTATPPDVFNHNLENVPRIYRQVRPGADYNWSLKLLERFKEAHPEIPTKSGLMVGLGETNEEIIEVMRDLRRHGVTMLTLGQYLQPSRHHLPVQRYVSPDEFDEMKAEALAMGFTHAACGPFVRSSYHADLQAKGMEVK</sequence>
<comment type="function">
    <text evidence="1">Catalyzes the radical-mediated insertion of two sulfur atoms into the C-6 and C-8 positions of the octanoyl moiety bound to the lipoyl domains of lipoate-dependent enzymes, thereby converting the octanoylated domains into lipoylated derivatives.</text>
</comment>
<comment type="catalytic activity">
    <reaction evidence="1">
        <text>[[Fe-S] cluster scaffold protein carrying a second [4Fe-4S](2+) cluster] + N(6)-octanoyl-L-lysyl-[protein] + 2 oxidized [2Fe-2S]-[ferredoxin] + 2 S-adenosyl-L-methionine + 4 H(+) = [[Fe-S] cluster scaffold protein] + N(6)-[(R)-dihydrolipoyl]-L-lysyl-[protein] + 4 Fe(3+) + 2 hydrogen sulfide + 2 5'-deoxyadenosine + 2 L-methionine + 2 reduced [2Fe-2S]-[ferredoxin]</text>
        <dbReference type="Rhea" id="RHEA:16585"/>
        <dbReference type="Rhea" id="RHEA-COMP:9928"/>
        <dbReference type="Rhea" id="RHEA-COMP:10000"/>
        <dbReference type="Rhea" id="RHEA-COMP:10001"/>
        <dbReference type="Rhea" id="RHEA-COMP:10475"/>
        <dbReference type="Rhea" id="RHEA-COMP:14568"/>
        <dbReference type="Rhea" id="RHEA-COMP:14569"/>
        <dbReference type="ChEBI" id="CHEBI:15378"/>
        <dbReference type="ChEBI" id="CHEBI:17319"/>
        <dbReference type="ChEBI" id="CHEBI:29034"/>
        <dbReference type="ChEBI" id="CHEBI:29919"/>
        <dbReference type="ChEBI" id="CHEBI:33722"/>
        <dbReference type="ChEBI" id="CHEBI:33737"/>
        <dbReference type="ChEBI" id="CHEBI:33738"/>
        <dbReference type="ChEBI" id="CHEBI:57844"/>
        <dbReference type="ChEBI" id="CHEBI:59789"/>
        <dbReference type="ChEBI" id="CHEBI:78809"/>
        <dbReference type="ChEBI" id="CHEBI:83100"/>
        <dbReference type="EC" id="2.8.1.8"/>
    </reaction>
</comment>
<comment type="cofactor">
    <cofactor evidence="1">
        <name>[4Fe-4S] cluster</name>
        <dbReference type="ChEBI" id="CHEBI:49883"/>
    </cofactor>
    <text evidence="1">Binds 2 [4Fe-4S] clusters per subunit. One cluster is coordinated with 3 cysteines and an exchangeable S-adenosyl-L-methionine.</text>
</comment>
<comment type="pathway">
    <text evidence="1">Protein modification; protein lipoylation via endogenous pathway; protein N(6)-(lipoyl)lysine from octanoyl-[acyl-carrier-protein]: step 2/2.</text>
</comment>
<comment type="subcellular location">
    <subcellularLocation>
        <location evidence="1">Cytoplasm</location>
    </subcellularLocation>
</comment>
<comment type="similarity">
    <text evidence="1">Belongs to the radical SAM superfamily. Lipoyl synthase family.</text>
</comment>
<organism>
    <name type="scientific">Escherichia coli O7:K1 (strain IAI39 / ExPEC)</name>
    <dbReference type="NCBI Taxonomy" id="585057"/>
    <lineage>
        <taxon>Bacteria</taxon>
        <taxon>Pseudomonadati</taxon>
        <taxon>Pseudomonadota</taxon>
        <taxon>Gammaproteobacteria</taxon>
        <taxon>Enterobacterales</taxon>
        <taxon>Enterobacteriaceae</taxon>
        <taxon>Escherichia</taxon>
    </lineage>
</organism>
<keyword id="KW-0004">4Fe-4S</keyword>
<keyword id="KW-0963">Cytoplasm</keyword>
<keyword id="KW-0408">Iron</keyword>
<keyword id="KW-0411">Iron-sulfur</keyword>
<keyword id="KW-0479">Metal-binding</keyword>
<keyword id="KW-0949">S-adenosyl-L-methionine</keyword>
<keyword id="KW-0808">Transferase</keyword>
<feature type="chain" id="PRO_1000191451" description="Lipoyl synthase">
    <location>
        <begin position="1"/>
        <end position="321"/>
    </location>
</feature>
<feature type="domain" description="Radical SAM core" evidence="2">
    <location>
        <begin position="80"/>
        <end position="297"/>
    </location>
</feature>
<feature type="binding site" evidence="1">
    <location>
        <position position="68"/>
    </location>
    <ligand>
        <name>[4Fe-4S] cluster</name>
        <dbReference type="ChEBI" id="CHEBI:49883"/>
        <label>1</label>
    </ligand>
</feature>
<feature type="binding site" evidence="1">
    <location>
        <position position="73"/>
    </location>
    <ligand>
        <name>[4Fe-4S] cluster</name>
        <dbReference type="ChEBI" id="CHEBI:49883"/>
        <label>1</label>
    </ligand>
</feature>
<feature type="binding site" evidence="1">
    <location>
        <position position="79"/>
    </location>
    <ligand>
        <name>[4Fe-4S] cluster</name>
        <dbReference type="ChEBI" id="CHEBI:49883"/>
        <label>1</label>
    </ligand>
</feature>
<feature type="binding site" evidence="1">
    <location>
        <position position="94"/>
    </location>
    <ligand>
        <name>[4Fe-4S] cluster</name>
        <dbReference type="ChEBI" id="CHEBI:49883"/>
        <label>2</label>
        <note>4Fe-4S-S-AdoMet</note>
    </ligand>
</feature>
<feature type="binding site" evidence="1">
    <location>
        <position position="98"/>
    </location>
    <ligand>
        <name>[4Fe-4S] cluster</name>
        <dbReference type="ChEBI" id="CHEBI:49883"/>
        <label>2</label>
        <note>4Fe-4S-S-AdoMet</note>
    </ligand>
</feature>
<feature type="binding site" evidence="1">
    <location>
        <position position="101"/>
    </location>
    <ligand>
        <name>[4Fe-4S] cluster</name>
        <dbReference type="ChEBI" id="CHEBI:49883"/>
        <label>2</label>
        <note>4Fe-4S-S-AdoMet</note>
    </ligand>
</feature>
<feature type="binding site" evidence="1">
    <location>
        <position position="308"/>
    </location>
    <ligand>
        <name>[4Fe-4S] cluster</name>
        <dbReference type="ChEBI" id="CHEBI:49883"/>
        <label>1</label>
    </ligand>
</feature>
<reference key="1">
    <citation type="journal article" date="2009" name="PLoS Genet.">
        <title>Organised genome dynamics in the Escherichia coli species results in highly diverse adaptive paths.</title>
        <authorList>
            <person name="Touchon M."/>
            <person name="Hoede C."/>
            <person name="Tenaillon O."/>
            <person name="Barbe V."/>
            <person name="Baeriswyl S."/>
            <person name="Bidet P."/>
            <person name="Bingen E."/>
            <person name="Bonacorsi S."/>
            <person name="Bouchier C."/>
            <person name="Bouvet O."/>
            <person name="Calteau A."/>
            <person name="Chiapello H."/>
            <person name="Clermont O."/>
            <person name="Cruveiller S."/>
            <person name="Danchin A."/>
            <person name="Diard M."/>
            <person name="Dossat C."/>
            <person name="Karoui M.E."/>
            <person name="Frapy E."/>
            <person name="Garry L."/>
            <person name="Ghigo J.M."/>
            <person name="Gilles A.M."/>
            <person name="Johnson J."/>
            <person name="Le Bouguenec C."/>
            <person name="Lescat M."/>
            <person name="Mangenot S."/>
            <person name="Martinez-Jehanne V."/>
            <person name="Matic I."/>
            <person name="Nassif X."/>
            <person name="Oztas S."/>
            <person name="Petit M.A."/>
            <person name="Pichon C."/>
            <person name="Rouy Z."/>
            <person name="Ruf C.S."/>
            <person name="Schneider D."/>
            <person name="Tourret J."/>
            <person name="Vacherie B."/>
            <person name="Vallenet D."/>
            <person name="Medigue C."/>
            <person name="Rocha E.P.C."/>
            <person name="Denamur E."/>
        </authorList>
    </citation>
    <scope>NUCLEOTIDE SEQUENCE [LARGE SCALE GENOMIC DNA]</scope>
    <source>
        <strain>IAI39 / ExPEC</strain>
    </source>
</reference>
<dbReference type="EC" id="2.8.1.8" evidence="1"/>
<dbReference type="EMBL" id="CU928164">
    <property type="protein sequence ID" value="CAR16740.1"/>
    <property type="molecule type" value="Genomic_DNA"/>
</dbReference>
<dbReference type="RefSeq" id="WP_000042632.1">
    <property type="nucleotide sequence ID" value="NC_011750.1"/>
</dbReference>
<dbReference type="RefSeq" id="YP_002406629.1">
    <property type="nucleotide sequence ID" value="NC_011750.1"/>
</dbReference>
<dbReference type="SMR" id="B7NLY7"/>
<dbReference type="STRING" id="585057.ECIAI39_0603"/>
<dbReference type="GeneID" id="93776854"/>
<dbReference type="KEGG" id="ect:ECIAI39_0603"/>
<dbReference type="PATRIC" id="fig|585057.6.peg.640"/>
<dbReference type="HOGENOM" id="CLU_033144_2_1_6"/>
<dbReference type="UniPathway" id="UPA00538">
    <property type="reaction ID" value="UER00593"/>
</dbReference>
<dbReference type="Proteomes" id="UP000000749">
    <property type="component" value="Chromosome"/>
</dbReference>
<dbReference type="GO" id="GO:0005737">
    <property type="term" value="C:cytoplasm"/>
    <property type="evidence" value="ECO:0007669"/>
    <property type="project" value="UniProtKB-SubCell"/>
</dbReference>
<dbReference type="GO" id="GO:0051539">
    <property type="term" value="F:4 iron, 4 sulfur cluster binding"/>
    <property type="evidence" value="ECO:0007669"/>
    <property type="project" value="UniProtKB-UniRule"/>
</dbReference>
<dbReference type="GO" id="GO:0016992">
    <property type="term" value="F:lipoate synthase activity"/>
    <property type="evidence" value="ECO:0007669"/>
    <property type="project" value="UniProtKB-UniRule"/>
</dbReference>
<dbReference type="GO" id="GO:0046872">
    <property type="term" value="F:metal ion binding"/>
    <property type="evidence" value="ECO:0007669"/>
    <property type="project" value="UniProtKB-KW"/>
</dbReference>
<dbReference type="CDD" id="cd01335">
    <property type="entry name" value="Radical_SAM"/>
    <property type="match status" value="1"/>
</dbReference>
<dbReference type="FunFam" id="3.20.20.70:FF:000023">
    <property type="entry name" value="Lipoyl synthase"/>
    <property type="match status" value="1"/>
</dbReference>
<dbReference type="Gene3D" id="3.20.20.70">
    <property type="entry name" value="Aldolase class I"/>
    <property type="match status" value="1"/>
</dbReference>
<dbReference type="HAMAP" id="MF_00206">
    <property type="entry name" value="Lipoyl_synth"/>
    <property type="match status" value="1"/>
</dbReference>
<dbReference type="InterPro" id="IPR013785">
    <property type="entry name" value="Aldolase_TIM"/>
</dbReference>
<dbReference type="InterPro" id="IPR006638">
    <property type="entry name" value="Elp3/MiaA/NifB-like_rSAM"/>
</dbReference>
<dbReference type="InterPro" id="IPR031691">
    <property type="entry name" value="LIAS_N"/>
</dbReference>
<dbReference type="InterPro" id="IPR003698">
    <property type="entry name" value="Lipoyl_synth"/>
</dbReference>
<dbReference type="InterPro" id="IPR007197">
    <property type="entry name" value="rSAM"/>
</dbReference>
<dbReference type="NCBIfam" id="TIGR00510">
    <property type="entry name" value="lipA"/>
    <property type="match status" value="1"/>
</dbReference>
<dbReference type="NCBIfam" id="NF004019">
    <property type="entry name" value="PRK05481.1"/>
    <property type="match status" value="1"/>
</dbReference>
<dbReference type="NCBIfam" id="NF009544">
    <property type="entry name" value="PRK12928.1"/>
    <property type="match status" value="1"/>
</dbReference>
<dbReference type="PANTHER" id="PTHR10949">
    <property type="entry name" value="LIPOYL SYNTHASE"/>
    <property type="match status" value="1"/>
</dbReference>
<dbReference type="PANTHER" id="PTHR10949:SF0">
    <property type="entry name" value="LIPOYL SYNTHASE, MITOCHONDRIAL"/>
    <property type="match status" value="1"/>
</dbReference>
<dbReference type="Pfam" id="PF16881">
    <property type="entry name" value="LIAS_N"/>
    <property type="match status" value="1"/>
</dbReference>
<dbReference type="Pfam" id="PF04055">
    <property type="entry name" value="Radical_SAM"/>
    <property type="match status" value="1"/>
</dbReference>
<dbReference type="PIRSF" id="PIRSF005963">
    <property type="entry name" value="Lipoyl_synth"/>
    <property type="match status" value="1"/>
</dbReference>
<dbReference type="SFLD" id="SFLDF00271">
    <property type="entry name" value="lipoyl_synthase"/>
    <property type="match status" value="1"/>
</dbReference>
<dbReference type="SFLD" id="SFLDG01058">
    <property type="entry name" value="lipoyl_synthase_like"/>
    <property type="match status" value="1"/>
</dbReference>
<dbReference type="SMART" id="SM00729">
    <property type="entry name" value="Elp3"/>
    <property type="match status" value="1"/>
</dbReference>
<dbReference type="SUPFAM" id="SSF102114">
    <property type="entry name" value="Radical SAM enzymes"/>
    <property type="match status" value="1"/>
</dbReference>
<dbReference type="PROSITE" id="PS51918">
    <property type="entry name" value="RADICAL_SAM"/>
    <property type="match status" value="1"/>
</dbReference>
<accession>B7NLY7</accession>
<proteinExistence type="inferred from homology"/>
<protein>
    <recommendedName>
        <fullName evidence="1">Lipoyl synthase</fullName>
        <ecNumber evidence="1">2.8.1.8</ecNumber>
    </recommendedName>
    <alternativeName>
        <fullName evidence="1">Lip-syn</fullName>
        <shortName evidence="1">LS</shortName>
    </alternativeName>
    <alternativeName>
        <fullName evidence="1">Lipoate synthase</fullName>
    </alternativeName>
    <alternativeName>
        <fullName evidence="1">Lipoic acid synthase</fullName>
    </alternativeName>
    <alternativeName>
        <fullName evidence="1">Sulfur insertion protein LipA</fullName>
    </alternativeName>
</protein>
<evidence type="ECO:0000255" key="1">
    <source>
        <dbReference type="HAMAP-Rule" id="MF_00206"/>
    </source>
</evidence>
<evidence type="ECO:0000255" key="2">
    <source>
        <dbReference type="PROSITE-ProRule" id="PRU01266"/>
    </source>
</evidence>
<gene>
    <name evidence="1" type="primary">lipA</name>
    <name type="ordered locus">ECIAI39_0603</name>
</gene>
<name>LIPA_ECO7I</name>